<protein>
    <recommendedName>
        <fullName evidence="1">Serine/threonine-protein kinase ATG1</fullName>
        <ecNumber evidence="1">2.7.11.1</ecNumber>
    </recommendedName>
    <alternativeName>
        <fullName evidence="1">Autophagy-related protein 1</fullName>
    </alternativeName>
</protein>
<feature type="chain" id="PRO_0000317798" description="Serine/threonine-protein kinase ATG1">
    <location>
        <begin position="1"/>
        <end position="951"/>
    </location>
</feature>
<feature type="domain" description="Protein kinase" evidence="2">
    <location>
        <begin position="22"/>
        <end position="327"/>
    </location>
</feature>
<feature type="region of interest" description="Disordered" evidence="4">
    <location>
        <begin position="343"/>
        <end position="375"/>
    </location>
</feature>
<feature type="region of interest" description="Disordered" evidence="4">
    <location>
        <begin position="387"/>
        <end position="458"/>
    </location>
</feature>
<feature type="region of interest" description="Disordered" evidence="4">
    <location>
        <begin position="514"/>
        <end position="573"/>
    </location>
</feature>
<feature type="region of interest" description="Disordered" evidence="4">
    <location>
        <begin position="924"/>
        <end position="951"/>
    </location>
</feature>
<feature type="compositionally biased region" description="Basic and acidic residues" evidence="4">
    <location>
        <begin position="359"/>
        <end position="368"/>
    </location>
</feature>
<feature type="compositionally biased region" description="Basic and acidic residues" evidence="4">
    <location>
        <begin position="432"/>
        <end position="442"/>
    </location>
</feature>
<feature type="compositionally biased region" description="Polar residues" evidence="4">
    <location>
        <begin position="547"/>
        <end position="573"/>
    </location>
</feature>
<feature type="compositionally biased region" description="Polar residues" evidence="4">
    <location>
        <begin position="939"/>
        <end position="951"/>
    </location>
</feature>
<feature type="active site" description="Proton acceptor" evidence="2 3">
    <location>
        <position position="165"/>
    </location>
</feature>
<feature type="binding site" evidence="2">
    <location>
        <begin position="28"/>
        <end position="36"/>
    </location>
    <ligand>
        <name>ATP</name>
        <dbReference type="ChEBI" id="CHEBI:30616"/>
    </ligand>
</feature>
<feature type="binding site" evidence="2">
    <location>
        <position position="51"/>
    </location>
    <ligand>
        <name>ATP</name>
        <dbReference type="ChEBI" id="CHEBI:30616"/>
    </ligand>
</feature>
<gene>
    <name evidence="1" type="primary">ATG1</name>
    <name evidence="5" type="ORF">SS1G_11231</name>
</gene>
<proteinExistence type="inferred from homology"/>
<reference key="1">
    <citation type="journal article" date="2011" name="PLoS Genet.">
        <title>Genomic analysis of the necrotrophic fungal pathogens Sclerotinia sclerotiorum and Botrytis cinerea.</title>
        <authorList>
            <person name="Amselem J."/>
            <person name="Cuomo C.A."/>
            <person name="van Kan J.A.L."/>
            <person name="Viaud M."/>
            <person name="Benito E.P."/>
            <person name="Couloux A."/>
            <person name="Coutinho P.M."/>
            <person name="de Vries R.P."/>
            <person name="Dyer P.S."/>
            <person name="Fillinger S."/>
            <person name="Fournier E."/>
            <person name="Gout L."/>
            <person name="Hahn M."/>
            <person name="Kohn L."/>
            <person name="Lapalu N."/>
            <person name="Plummer K.M."/>
            <person name="Pradier J.-M."/>
            <person name="Quevillon E."/>
            <person name="Sharon A."/>
            <person name="Simon A."/>
            <person name="ten Have A."/>
            <person name="Tudzynski B."/>
            <person name="Tudzynski P."/>
            <person name="Wincker P."/>
            <person name="Andrew M."/>
            <person name="Anthouard V."/>
            <person name="Beever R.E."/>
            <person name="Beffa R."/>
            <person name="Benoit I."/>
            <person name="Bouzid O."/>
            <person name="Brault B."/>
            <person name="Chen Z."/>
            <person name="Choquer M."/>
            <person name="Collemare J."/>
            <person name="Cotton P."/>
            <person name="Danchin E.G."/>
            <person name="Da Silva C."/>
            <person name="Gautier A."/>
            <person name="Giraud C."/>
            <person name="Giraud T."/>
            <person name="Gonzalez C."/>
            <person name="Grossetete S."/>
            <person name="Gueldener U."/>
            <person name="Henrissat B."/>
            <person name="Howlett B.J."/>
            <person name="Kodira C."/>
            <person name="Kretschmer M."/>
            <person name="Lappartient A."/>
            <person name="Leroch M."/>
            <person name="Levis C."/>
            <person name="Mauceli E."/>
            <person name="Neuveglise C."/>
            <person name="Oeser B."/>
            <person name="Pearson M."/>
            <person name="Poulain J."/>
            <person name="Poussereau N."/>
            <person name="Quesneville H."/>
            <person name="Rascle C."/>
            <person name="Schumacher J."/>
            <person name="Segurens B."/>
            <person name="Sexton A."/>
            <person name="Silva E."/>
            <person name="Sirven C."/>
            <person name="Soanes D.M."/>
            <person name="Talbot N.J."/>
            <person name="Templeton M."/>
            <person name="Yandava C."/>
            <person name="Yarden O."/>
            <person name="Zeng Q."/>
            <person name="Rollins J.A."/>
            <person name="Lebrun M.-H."/>
            <person name="Dickman M."/>
        </authorList>
    </citation>
    <scope>NUCLEOTIDE SEQUENCE [LARGE SCALE GENOMIC DNA]</scope>
    <source>
        <strain>ATCC 18683 / 1980 / Ss-1</strain>
    </source>
</reference>
<dbReference type="EC" id="2.7.11.1" evidence="1"/>
<dbReference type="EMBL" id="CH476637">
    <property type="protein sequence ID" value="EDN95354.1"/>
    <property type="molecule type" value="Genomic_DNA"/>
</dbReference>
<dbReference type="RefSeq" id="XP_001587989.1">
    <property type="nucleotide sequence ID" value="XM_001587939.1"/>
</dbReference>
<dbReference type="SMR" id="A7F0W2"/>
<dbReference type="FunCoup" id="A7F0W2">
    <property type="interactions" value="73"/>
</dbReference>
<dbReference type="STRING" id="665079.A7F0W2"/>
<dbReference type="EnsemblFungi" id="EDN95354">
    <property type="protein sequence ID" value="EDN95354"/>
    <property type="gene ID" value="SS1G_11231"/>
</dbReference>
<dbReference type="GeneID" id="5483860"/>
<dbReference type="KEGG" id="ssl:SS1G_11231"/>
<dbReference type="VEuPathDB" id="FungiDB:sscle_12g087380"/>
<dbReference type="eggNOG" id="KOG0595">
    <property type="taxonomic scope" value="Eukaryota"/>
</dbReference>
<dbReference type="HOGENOM" id="CLU_006447_0_0_1"/>
<dbReference type="InParanoid" id="A7F0W2"/>
<dbReference type="OMA" id="INNVVQW"/>
<dbReference type="OrthoDB" id="346907at2759"/>
<dbReference type="Proteomes" id="UP000001312">
    <property type="component" value="Unassembled WGS sequence"/>
</dbReference>
<dbReference type="GO" id="GO:1990316">
    <property type="term" value="C:Atg1/ULK1 kinase complex"/>
    <property type="evidence" value="ECO:0007669"/>
    <property type="project" value="EnsemblFungi"/>
</dbReference>
<dbReference type="GO" id="GO:0005776">
    <property type="term" value="C:autophagosome"/>
    <property type="evidence" value="ECO:0000318"/>
    <property type="project" value="GO_Central"/>
</dbReference>
<dbReference type="GO" id="GO:0000421">
    <property type="term" value="C:autophagosome membrane"/>
    <property type="evidence" value="ECO:0007669"/>
    <property type="project" value="EnsemblFungi"/>
</dbReference>
<dbReference type="GO" id="GO:0005737">
    <property type="term" value="C:cytoplasm"/>
    <property type="evidence" value="ECO:0000318"/>
    <property type="project" value="GO_Central"/>
</dbReference>
<dbReference type="GO" id="GO:0005829">
    <property type="term" value="C:cytosol"/>
    <property type="evidence" value="ECO:0000318"/>
    <property type="project" value="GO_Central"/>
</dbReference>
<dbReference type="GO" id="GO:0061908">
    <property type="term" value="C:phagophore"/>
    <property type="evidence" value="ECO:0007669"/>
    <property type="project" value="EnsemblFungi"/>
</dbReference>
<dbReference type="GO" id="GO:0000407">
    <property type="term" value="C:phagophore assembly site"/>
    <property type="evidence" value="ECO:0000318"/>
    <property type="project" value="GO_Central"/>
</dbReference>
<dbReference type="GO" id="GO:0034045">
    <property type="term" value="C:phagophore assembly site membrane"/>
    <property type="evidence" value="ECO:0000318"/>
    <property type="project" value="GO_Central"/>
</dbReference>
<dbReference type="GO" id="GO:0120095">
    <property type="term" value="C:vacuole-isolation membrane contact site"/>
    <property type="evidence" value="ECO:0007669"/>
    <property type="project" value="EnsemblFungi"/>
</dbReference>
<dbReference type="GO" id="GO:0005524">
    <property type="term" value="F:ATP binding"/>
    <property type="evidence" value="ECO:0007669"/>
    <property type="project" value="UniProtKB-KW"/>
</dbReference>
<dbReference type="GO" id="GO:0106310">
    <property type="term" value="F:protein serine kinase activity"/>
    <property type="evidence" value="ECO:0007669"/>
    <property type="project" value="RHEA"/>
</dbReference>
<dbReference type="GO" id="GO:0004674">
    <property type="term" value="F:protein serine/threonine kinase activity"/>
    <property type="evidence" value="ECO:0000318"/>
    <property type="project" value="GO_Central"/>
</dbReference>
<dbReference type="GO" id="GO:0000045">
    <property type="term" value="P:autophagosome assembly"/>
    <property type="evidence" value="ECO:0000318"/>
    <property type="project" value="GO_Central"/>
</dbReference>
<dbReference type="GO" id="GO:0006995">
    <property type="term" value="P:cellular response to nitrogen starvation"/>
    <property type="evidence" value="ECO:0007669"/>
    <property type="project" value="EnsemblFungi"/>
</dbReference>
<dbReference type="GO" id="GO:0051365">
    <property type="term" value="P:cellular response to potassium ion starvation"/>
    <property type="evidence" value="ECO:0007669"/>
    <property type="project" value="EnsemblFungi"/>
</dbReference>
<dbReference type="GO" id="GO:0000423">
    <property type="term" value="P:mitophagy"/>
    <property type="evidence" value="ECO:0000318"/>
    <property type="project" value="GO_Central"/>
</dbReference>
<dbReference type="GO" id="GO:0034727">
    <property type="term" value="P:piecemeal microautophagy of the nucleus"/>
    <property type="evidence" value="ECO:0000318"/>
    <property type="project" value="GO_Central"/>
</dbReference>
<dbReference type="GO" id="GO:0034497">
    <property type="term" value="P:protein localization to phagophore assembly site"/>
    <property type="evidence" value="ECO:0007669"/>
    <property type="project" value="EnsemblFungi"/>
</dbReference>
<dbReference type="GO" id="GO:0015031">
    <property type="term" value="P:protein transport"/>
    <property type="evidence" value="ECO:0007669"/>
    <property type="project" value="UniProtKB-KW"/>
</dbReference>
<dbReference type="GO" id="GO:0010506">
    <property type="term" value="P:regulation of autophagy"/>
    <property type="evidence" value="ECO:0000318"/>
    <property type="project" value="GO_Central"/>
</dbReference>
<dbReference type="GO" id="GO:0042594">
    <property type="term" value="P:response to starvation"/>
    <property type="evidence" value="ECO:0000318"/>
    <property type="project" value="GO_Central"/>
</dbReference>
<dbReference type="GO" id="GO:0061709">
    <property type="term" value="P:reticulophagy"/>
    <property type="evidence" value="ECO:0000318"/>
    <property type="project" value="GO_Central"/>
</dbReference>
<dbReference type="CDD" id="cd14009">
    <property type="entry name" value="STKc_ATG1_ULK_like"/>
    <property type="match status" value="1"/>
</dbReference>
<dbReference type="FunFam" id="3.30.200.20:FF:000042">
    <property type="entry name" value="Aurora kinase A"/>
    <property type="match status" value="1"/>
</dbReference>
<dbReference type="FunFam" id="1.10.510.10:FF:000817">
    <property type="entry name" value="Serine/threonine-protein kinase ATG1"/>
    <property type="match status" value="1"/>
</dbReference>
<dbReference type="Gene3D" id="1.10.510.10">
    <property type="entry name" value="Transferase(Phosphotransferase) domain 1"/>
    <property type="match status" value="1"/>
</dbReference>
<dbReference type="InterPro" id="IPR045269">
    <property type="entry name" value="Atg1-like"/>
</dbReference>
<dbReference type="InterPro" id="IPR048941">
    <property type="entry name" value="ATG1-like_MIT2"/>
</dbReference>
<dbReference type="InterPro" id="IPR022708">
    <property type="entry name" value="Atg1-like_tMIT"/>
</dbReference>
<dbReference type="InterPro" id="IPR011009">
    <property type="entry name" value="Kinase-like_dom_sf"/>
</dbReference>
<dbReference type="InterPro" id="IPR000719">
    <property type="entry name" value="Prot_kinase_dom"/>
</dbReference>
<dbReference type="InterPro" id="IPR017441">
    <property type="entry name" value="Protein_kinase_ATP_BS"/>
</dbReference>
<dbReference type="InterPro" id="IPR008271">
    <property type="entry name" value="Ser/Thr_kinase_AS"/>
</dbReference>
<dbReference type="PANTHER" id="PTHR24348:SF22">
    <property type="entry name" value="NON-SPECIFIC SERINE_THREONINE PROTEIN KINASE"/>
    <property type="match status" value="1"/>
</dbReference>
<dbReference type="PANTHER" id="PTHR24348">
    <property type="entry name" value="SERINE/THREONINE-PROTEIN KINASE UNC-51-RELATED"/>
    <property type="match status" value="1"/>
</dbReference>
<dbReference type="Pfam" id="PF12063">
    <property type="entry name" value="ATG1-like_MIT1"/>
    <property type="match status" value="1"/>
</dbReference>
<dbReference type="Pfam" id="PF21127">
    <property type="entry name" value="ATG1-like_MIT2"/>
    <property type="match status" value="1"/>
</dbReference>
<dbReference type="Pfam" id="PF00069">
    <property type="entry name" value="Pkinase"/>
    <property type="match status" value="1"/>
</dbReference>
<dbReference type="SMART" id="SM00220">
    <property type="entry name" value="S_TKc"/>
    <property type="match status" value="1"/>
</dbReference>
<dbReference type="SUPFAM" id="SSF56112">
    <property type="entry name" value="Protein kinase-like (PK-like)"/>
    <property type="match status" value="1"/>
</dbReference>
<dbReference type="PROSITE" id="PS00107">
    <property type="entry name" value="PROTEIN_KINASE_ATP"/>
    <property type="match status" value="1"/>
</dbReference>
<dbReference type="PROSITE" id="PS50011">
    <property type="entry name" value="PROTEIN_KINASE_DOM"/>
    <property type="match status" value="1"/>
</dbReference>
<dbReference type="PROSITE" id="PS00108">
    <property type="entry name" value="PROTEIN_KINASE_ST"/>
    <property type="match status" value="1"/>
</dbReference>
<name>ATG1_SCLS1</name>
<keyword id="KW-0067">ATP-binding</keyword>
<keyword id="KW-0072">Autophagy</keyword>
<keyword id="KW-0963">Cytoplasm</keyword>
<keyword id="KW-0418">Kinase</keyword>
<keyword id="KW-0472">Membrane</keyword>
<keyword id="KW-0547">Nucleotide-binding</keyword>
<keyword id="KW-0653">Protein transport</keyword>
<keyword id="KW-1185">Reference proteome</keyword>
<keyword id="KW-0723">Serine/threonine-protein kinase</keyword>
<keyword id="KW-0808">Transferase</keyword>
<keyword id="KW-0813">Transport</keyword>
<accession>A7F0W2</accession>
<evidence type="ECO:0000250" key="1">
    <source>
        <dbReference type="UniProtKB" id="P53104"/>
    </source>
</evidence>
<evidence type="ECO:0000255" key="2">
    <source>
        <dbReference type="PROSITE-ProRule" id="PRU00159"/>
    </source>
</evidence>
<evidence type="ECO:0000255" key="3">
    <source>
        <dbReference type="PROSITE-ProRule" id="PRU10027"/>
    </source>
</evidence>
<evidence type="ECO:0000256" key="4">
    <source>
        <dbReference type="SAM" id="MobiDB-lite"/>
    </source>
</evidence>
<evidence type="ECO:0000303" key="5">
    <source>
    </source>
</evidence>
<comment type="function">
    <text evidence="1">Serine/threonine protein kinase involved in the cytoplasm to vacuole transport (Cvt) and found to be essential in autophagy, where it is required for the formation of autophagosomes. Involved in the clearance of protein aggregates which cannot be efficiently cleared by the proteasome. Required for selective autophagic degradation of the nucleus (nucleophagy) as well as for mitophagy which contributes to regulate mitochondrial quantity and quality by eliminating the mitochondria to a basal level to fulfill cellular energy requirements and preventing excess ROS production. Also involved in endoplasmic reticulum-specific autophagic process, in selective removal of ER-associated degradation (ERAD) substrates. Plays a key role in ATG9 and ATG23 cycling through the pre-autophagosomal structure and is necessary to promote ATG18 binding to ATG9 through phosphorylation of ATG9. Catalyzes phosphorylation of ATG4, decreasing the interaction between ATG4 and ATG8 and impairing deconjugation of PE-conjugated forms of ATG8.</text>
</comment>
<comment type="catalytic activity">
    <reaction evidence="1">
        <text>L-seryl-[protein] + ATP = O-phospho-L-seryl-[protein] + ADP + H(+)</text>
        <dbReference type="Rhea" id="RHEA:17989"/>
        <dbReference type="Rhea" id="RHEA-COMP:9863"/>
        <dbReference type="Rhea" id="RHEA-COMP:11604"/>
        <dbReference type="ChEBI" id="CHEBI:15378"/>
        <dbReference type="ChEBI" id="CHEBI:29999"/>
        <dbReference type="ChEBI" id="CHEBI:30616"/>
        <dbReference type="ChEBI" id="CHEBI:83421"/>
        <dbReference type="ChEBI" id="CHEBI:456216"/>
        <dbReference type="EC" id="2.7.11.1"/>
    </reaction>
</comment>
<comment type="catalytic activity">
    <reaction evidence="1">
        <text>L-threonyl-[protein] + ATP = O-phospho-L-threonyl-[protein] + ADP + H(+)</text>
        <dbReference type="Rhea" id="RHEA:46608"/>
        <dbReference type="Rhea" id="RHEA-COMP:11060"/>
        <dbReference type="Rhea" id="RHEA-COMP:11605"/>
        <dbReference type="ChEBI" id="CHEBI:15378"/>
        <dbReference type="ChEBI" id="CHEBI:30013"/>
        <dbReference type="ChEBI" id="CHEBI:30616"/>
        <dbReference type="ChEBI" id="CHEBI:61977"/>
        <dbReference type="ChEBI" id="CHEBI:456216"/>
        <dbReference type="EC" id="2.7.11.1"/>
    </reaction>
</comment>
<comment type="subunit">
    <text evidence="1">Homodimer. Forms a ternary complex with ATG13 and ATG17.</text>
</comment>
<comment type="subcellular location">
    <subcellularLocation>
        <location evidence="1">Cytoplasm</location>
    </subcellularLocation>
    <subcellularLocation>
        <location evidence="1">Preautophagosomal structure membrane</location>
        <topology evidence="1">Peripheral membrane protein</topology>
    </subcellularLocation>
</comment>
<comment type="similarity">
    <text evidence="2">Belongs to the protein kinase superfamily. Ser/Thr protein kinase family. APG1/unc-51/ULK1 subfamily.</text>
</comment>
<organism>
    <name type="scientific">Sclerotinia sclerotiorum (strain ATCC 18683 / 1980 / Ss-1)</name>
    <name type="common">White mold</name>
    <name type="synonym">Whetzelinia sclerotiorum</name>
    <dbReference type="NCBI Taxonomy" id="665079"/>
    <lineage>
        <taxon>Eukaryota</taxon>
        <taxon>Fungi</taxon>
        <taxon>Dikarya</taxon>
        <taxon>Ascomycota</taxon>
        <taxon>Pezizomycotina</taxon>
        <taxon>Leotiomycetes</taxon>
        <taxon>Helotiales</taxon>
        <taxon>Sclerotiniaceae</taxon>
        <taxon>Sclerotinia</taxon>
    </lineage>
</organism>
<sequence length="951" mass="104696">MASKTPSSSSSRRPRNVGVGSFTINEEIGKGSFATVYRGTHVPSGSLVAIKSVNLGRLNKKLKDNLYVEIEILKSLHHPHIVALMDCRESTSHIHLMMEYCELGDLSYFIKKRDKLADNPSLFDMIRKYPMPVDGGLNQVVVRHFFKQLSSAMEFLRDRDFVHRDVKPQNLLLIPSPDWMAKSKNGPEAMKASKESIVPMVGINSLPMLKLADFGFARSLPSTSLAETLCGSPLYMAPEILRYEKYDARADLWSIGTVLYEMMTGKPPFRAANHVELLRKIEQNEDEIRFPSKTVFSRDLKDIARRFLKKRPEDRITFPEYFAHPVVTGPIPGLVGEDLPKEIITPSRSPEASVARHPSLRERQRENPTPKPVETTYESLIARDIGEQAPRSPHIEANQPVEIPGHKSGRPGSRDRPSAISAATAPNVDTLPRQRDRTERHYAPIGRPVSRKPSYDEQANLPVQEEIRSSDSITEAEQDVRDAREYVLVEKKAVEVNAFADEMAASPRLAHANHIPKQPTRRHTSMGAPNSTSGAVAVPPSRAVQKAQGNTRPDTSSARNSYGSYGKTGSSPSTASAIAKALQGASVRVFGVSWSPTLIGKGPSPQQLYNPYPAYPTPNTGFIGDARPIDEDQRVVNVIEDSATRSDVVYGFAEVKYRQLIPLAPSMNHGLGGPNNEKVGDAMDEDDGLTVEAIVNLSEEALVLYVKSLSLLSKSMDIAGAWWLRKNRGGVISGGHTPGSDSSSAVQAGNRINGAVQWVRTRFNEVLEKAELVRLKLVEAQKRLPEDHPGHPSNHATASKIVGGSSTTDGVVLSSGITAEKLMYDRALEMSRTAAINELANEDLPGCEISYTTAIRMLEAVLENDEELIPRKRSPSLREDKEKCDGGEVNGINFGDRKDVLKVLQMIRTRLHVLKKKMAVIARHQSMPPPSSPRHSHSGGTTPTIANTPPH</sequence>